<gene>
    <name type="primary">RPS18</name>
</gene>
<dbReference type="EMBL" id="X83693">
    <property type="protein sequence ID" value="CAA58668.1"/>
    <property type="molecule type" value="mRNA"/>
</dbReference>
<dbReference type="PIR" id="S51145">
    <property type="entry name" value="S51145"/>
</dbReference>
<dbReference type="SMR" id="P49202"/>
<dbReference type="PaxDb" id="3055-EDP08449"/>
<dbReference type="ProMEX" id="P49202"/>
<dbReference type="eggNOG" id="KOG3311">
    <property type="taxonomic scope" value="Eukaryota"/>
</dbReference>
<dbReference type="GO" id="GO:0005737">
    <property type="term" value="C:cytoplasm"/>
    <property type="evidence" value="ECO:0007669"/>
    <property type="project" value="UniProtKB-SubCell"/>
</dbReference>
<dbReference type="GO" id="GO:1990904">
    <property type="term" value="C:ribonucleoprotein complex"/>
    <property type="evidence" value="ECO:0007669"/>
    <property type="project" value="UniProtKB-KW"/>
</dbReference>
<dbReference type="GO" id="GO:0005840">
    <property type="term" value="C:ribosome"/>
    <property type="evidence" value="ECO:0007669"/>
    <property type="project" value="UniProtKB-KW"/>
</dbReference>
<dbReference type="GO" id="GO:0019843">
    <property type="term" value="F:rRNA binding"/>
    <property type="evidence" value="ECO:0007669"/>
    <property type="project" value="UniProtKB-KW"/>
</dbReference>
<dbReference type="GO" id="GO:0003735">
    <property type="term" value="F:structural constituent of ribosome"/>
    <property type="evidence" value="ECO:0007669"/>
    <property type="project" value="InterPro"/>
</dbReference>
<dbReference type="GO" id="GO:0006412">
    <property type="term" value="P:translation"/>
    <property type="evidence" value="ECO:0007669"/>
    <property type="project" value="InterPro"/>
</dbReference>
<dbReference type="FunFam" id="1.10.8.50:FF:000002">
    <property type="entry name" value="40S ribosomal protein S18"/>
    <property type="match status" value="1"/>
</dbReference>
<dbReference type="FunFam" id="4.10.910.10:FF:000002">
    <property type="entry name" value="40S ribosomal protein S18"/>
    <property type="match status" value="1"/>
</dbReference>
<dbReference type="Gene3D" id="1.10.8.50">
    <property type="match status" value="1"/>
</dbReference>
<dbReference type="Gene3D" id="4.10.910.10">
    <property type="entry name" value="30s ribosomal protein s13, domain 2"/>
    <property type="match status" value="1"/>
</dbReference>
<dbReference type="HAMAP" id="MF_01315">
    <property type="entry name" value="Ribosomal_uS13"/>
    <property type="match status" value="1"/>
</dbReference>
<dbReference type="InterPro" id="IPR027437">
    <property type="entry name" value="Rbsml_uS13_C"/>
</dbReference>
<dbReference type="InterPro" id="IPR001892">
    <property type="entry name" value="Ribosomal_uS13"/>
</dbReference>
<dbReference type="InterPro" id="IPR010979">
    <property type="entry name" value="Ribosomal_uS13-like_H2TH"/>
</dbReference>
<dbReference type="InterPro" id="IPR018269">
    <property type="entry name" value="Ribosomal_uS13_CS"/>
</dbReference>
<dbReference type="NCBIfam" id="NF003140">
    <property type="entry name" value="PRK04053.1"/>
    <property type="match status" value="1"/>
</dbReference>
<dbReference type="PANTHER" id="PTHR10871">
    <property type="entry name" value="30S RIBOSOMAL PROTEIN S13/40S RIBOSOMAL PROTEIN S18"/>
    <property type="match status" value="1"/>
</dbReference>
<dbReference type="PANTHER" id="PTHR10871:SF3">
    <property type="entry name" value="SMALL RIBOSOMAL SUBUNIT PROTEIN US13"/>
    <property type="match status" value="1"/>
</dbReference>
<dbReference type="Pfam" id="PF00416">
    <property type="entry name" value="Ribosomal_S13"/>
    <property type="match status" value="1"/>
</dbReference>
<dbReference type="PIRSF" id="PIRSF002134">
    <property type="entry name" value="Ribosomal_S13"/>
    <property type="match status" value="1"/>
</dbReference>
<dbReference type="SUPFAM" id="SSF46946">
    <property type="entry name" value="S13-like H2TH domain"/>
    <property type="match status" value="1"/>
</dbReference>
<dbReference type="PROSITE" id="PS00646">
    <property type="entry name" value="RIBOSOMAL_S13_1"/>
    <property type="match status" value="1"/>
</dbReference>
<dbReference type="PROSITE" id="PS50159">
    <property type="entry name" value="RIBOSOMAL_S13_2"/>
    <property type="match status" value="1"/>
</dbReference>
<reference key="1">
    <citation type="journal article" date="1995" name="Plant Sci.">
        <title>cDNA nucleotide sequences and expression of the genes encoding the cytoplasmic ribosomal proteins S18 and S27 from the green alga Chlamydomonas reinhardtii.</title>
        <authorList>
            <person name="Kueck U."/>
            <person name="Hahn D."/>
        </authorList>
    </citation>
    <scope>NUCLEOTIDE SEQUENCE [MRNA]</scope>
    <source>
        <strain>CC-406</strain>
    </source>
</reference>
<feature type="chain" id="PRO_0000132222" description="Small ribosomal subunit protein uS13">
    <location>
        <begin position="1"/>
        <end position="153"/>
    </location>
</feature>
<accession>P49202</accession>
<comment type="function">
    <text evidence="1">Located at the top of the head of the 40S subunit, it contacts several helices of the 18S rRNA.</text>
</comment>
<comment type="subcellular location">
    <subcellularLocation>
        <location>Cytoplasm</location>
    </subcellularLocation>
</comment>
<comment type="similarity">
    <text evidence="2">Belongs to the universal ribosomal protein uS13 family.</text>
</comment>
<sequence length="153" mass="17437">MGSLVQGDDFQHILRLLNTNVDGKNKIMYAMTAIRGIGRRFSNLVCKKAEVDLRKAAGECSADELERMMGIVANPRAYKIPDWFLNRQKDHKTGRFSQLTSSQLDTVMRDDLERLKKIRGHRGLRHYWGLRVRGQHTKTTGRAGKTVGVAKKK</sequence>
<keyword id="KW-0963">Cytoplasm</keyword>
<keyword id="KW-0687">Ribonucleoprotein</keyword>
<keyword id="KW-0689">Ribosomal protein</keyword>
<keyword id="KW-0694">RNA-binding</keyword>
<keyword id="KW-0699">rRNA-binding</keyword>
<organism>
    <name type="scientific">Chlamydomonas reinhardtii</name>
    <name type="common">Chlamydomonas smithii</name>
    <dbReference type="NCBI Taxonomy" id="3055"/>
    <lineage>
        <taxon>Eukaryota</taxon>
        <taxon>Viridiplantae</taxon>
        <taxon>Chlorophyta</taxon>
        <taxon>core chlorophytes</taxon>
        <taxon>Chlorophyceae</taxon>
        <taxon>CS clade</taxon>
        <taxon>Chlamydomonadales</taxon>
        <taxon>Chlamydomonadaceae</taxon>
        <taxon>Chlamydomonas</taxon>
    </lineage>
</organism>
<evidence type="ECO:0000250" key="1"/>
<evidence type="ECO:0000305" key="2"/>
<proteinExistence type="evidence at transcript level"/>
<protein>
    <recommendedName>
        <fullName evidence="2">Small ribosomal subunit protein uS13</fullName>
    </recommendedName>
    <alternativeName>
        <fullName>40S ribosomal protein S18</fullName>
    </alternativeName>
</protein>
<name>RS18_CHLRE</name>